<keyword id="KW-0067">ATP-binding</keyword>
<keyword id="KW-0963">Cytoplasm</keyword>
<keyword id="KW-0324">Glycolysis</keyword>
<keyword id="KW-0418">Kinase</keyword>
<keyword id="KW-0547">Nucleotide-binding</keyword>
<keyword id="KW-1185">Reference proteome</keyword>
<keyword id="KW-0808">Transferase</keyword>
<gene>
    <name evidence="1" type="primary">pgk</name>
    <name type="ordered locus">SynWH7803_2351</name>
</gene>
<organism>
    <name type="scientific">Synechococcus sp. (strain WH7803)</name>
    <dbReference type="NCBI Taxonomy" id="32051"/>
    <lineage>
        <taxon>Bacteria</taxon>
        <taxon>Bacillati</taxon>
        <taxon>Cyanobacteriota</taxon>
        <taxon>Cyanophyceae</taxon>
        <taxon>Synechococcales</taxon>
        <taxon>Synechococcaceae</taxon>
        <taxon>Synechococcus</taxon>
    </lineage>
</organism>
<proteinExistence type="inferred from homology"/>
<name>PGK_SYNPW</name>
<protein>
    <recommendedName>
        <fullName evidence="1">Phosphoglycerate kinase</fullName>
        <ecNumber evidence="1">2.7.2.3</ecNumber>
    </recommendedName>
</protein>
<accession>A5GPB2</accession>
<sequence>MAKRSLASLNAGDLSGKRVLVRVDFNVPLNDAGAITDDTRIRAALPTINDLIGKGAKVILSAHFGRPKGQVNDAMRLTPVAARLSELLGKPVAKTDSCIGPDAEAKVGAMADGDVVLLENVRFFAEEEKNEAGFAEKLAGLAEVYVNDAFGAAHRAHASTEGVTKFLKPAVAGFLMEKELQYLQGAVDEPKRPLAAIVGGSKVSSKIGVLEALIDKCDKVLIGGGMIFTFYKARGLSVGKSLVEEDKLELAKELEAKAKAKGVELLLPTDVVLADNFAPDANSQVADVTAIPDGWMGLDIGPDAVKVFQAALADCQTVIWNGPMGVFEFEKFATGTNAIATTLAELSAKGCCTIIGGGDSVAAVEKAGLAEKMSHISTGGGASLELLEGKVLPGVAALNDAA</sequence>
<feature type="chain" id="PRO_1000058079" description="Phosphoglycerate kinase">
    <location>
        <begin position="1"/>
        <end position="402"/>
    </location>
</feature>
<feature type="binding site" evidence="1">
    <location>
        <begin position="24"/>
        <end position="26"/>
    </location>
    <ligand>
        <name>substrate</name>
    </ligand>
</feature>
<feature type="binding site" evidence="1">
    <location>
        <position position="40"/>
    </location>
    <ligand>
        <name>substrate</name>
    </ligand>
</feature>
<feature type="binding site" evidence="1">
    <location>
        <begin position="63"/>
        <end position="66"/>
    </location>
    <ligand>
        <name>substrate</name>
    </ligand>
</feature>
<feature type="binding site" evidence="1">
    <location>
        <position position="122"/>
    </location>
    <ligand>
        <name>substrate</name>
    </ligand>
</feature>
<feature type="binding site" evidence="1">
    <location>
        <position position="155"/>
    </location>
    <ligand>
        <name>substrate</name>
    </ligand>
</feature>
<feature type="binding site" evidence="1">
    <location>
        <position position="206"/>
    </location>
    <ligand>
        <name>ATP</name>
        <dbReference type="ChEBI" id="CHEBI:30616"/>
    </ligand>
</feature>
<feature type="binding site" evidence="1">
    <location>
        <position position="297"/>
    </location>
    <ligand>
        <name>ATP</name>
        <dbReference type="ChEBI" id="CHEBI:30616"/>
    </ligand>
</feature>
<feature type="binding site" evidence="1">
    <location>
        <position position="328"/>
    </location>
    <ligand>
        <name>ATP</name>
        <dbReference type="ChEBI" id="CHEBI:30616"/>
    </ligand>
</feature>
<feature type="binding site" evidence="1">
    <location>
        <begin position="357"/>
        <end position="360"/>
    </location>
    <ligand>
        <name>ATP</name>
        <dbReference type="ChEBI" id="CHEBI:30616"/>
    </ligand>
</feature>
<comment type="catalytic activity">
    <reaction evidence="1">
        <text>(2R)-3-phosphoglycerate + ATP = (2R)-3-phospho-glyceroyl phosphate + ADP</text>
        <dbReference type="Rhea" id="RHEA:14801"/>
        <dbReference type="ChEBI" id="CHEBI:30616"/>
        <dbReference type="ChEBI" id="CHEBI:57604"/>
        <dbReference type="ChEBI" id="CHEBI:58272"/>
        <dbReference type="ChEBI" id="CHEBI:456216"/>
        <dbReference type="EC" id="2.7.2.3"/>
    </reaction>
</comment>
<comment type="pathway">
    <text evidence="1">Carbohydrate degradation; glycolysis; pyruvate from D-glyceraldehyde 3-phosphate: step 2/5.</text>
</comment>
<comment type="subunit">
    <text evidence="1">Monomer.</text>
</comment>
<comment type="subcellular location">
    <subcellularLocation>
        <location evidence="1">Cytoplasm</location>
    </subcellularLocation>
</comment>
<comment type="similarity">
    <text evidence="1">Belongs to the phosphoglycerate kinase family.</text>
</comment>
<dbReference type="EC" id="2.7.2.3" evidence="1"/>
<dbReference type="EMBL" id="CT971583">
    <property type="protein sequence ID" value="CAK24777.1"/>
    <property type="molecule type" value="Genomic_DNA"/>
</dbReference>
<dbReference type="SMR" id="A5GPB2"/>
<dbReference type="STRING" id="32051.SynWH7803_2351"/>
<dbReference type="KEGG" id="syx:SynWH7803_2351"/>
<dbReference type="eggNOG" id="COG0126">
    <property type="taxonomic scope" value="Bacteria"/>
</dbReference>
<dbReference type="HOGENOM" id="CLU_025427_0_2_3"/>
<dbReference type="OrthoDB" id="9808460at2"/>
<dbReference type="UniPathway" id="UPA00109">
    <property type="reaction ID" value="UER00185"/>
</dbReference>
<dbReference type="Proteomes" id="UP000001566">
    <property type="component" value="Chromosome"/>
</dbReference>
<dbReference type="GO" id="GO:0005829">
    <property type="term" value="C:cytosol"/>
    <property type="evidence" value="ECO:0007669"/>
    <property type="project" value="TreeGrafter"/>
</dbReference>
<dbReference type="GO" id="GO:0043531">
    <property type="term" value="F:ADP binding"/>
    <property type="evidence" value="ECO:0007669"/>
    <property type="project" value="TreeGrafter"/>
</dbReference>
<dbReference type="GO" id="GO:0005524">
    <property type="term" value="F:ATP binding"/>
    <property type="evidence" value="ECO:0007669"/>
    <property type="project" value="UniProtKB-KW"/>
</dbReference>
<dbReference type="GO" id="GO:0004618">
    <property type="term" value="F:phosphoglycerate kinase activity"/>
    <property type="evidence" value="ECO:0007669"/>
    <property type="project" value="UniProtKB-UniRule"/>
</dbReference>
<dbReference type="GO" id="GO:0006094">
    <property type="term" value="P:gluconeogenesis"/>
    <property type="evidence" value="ECO:0007669"/>
    <property type="project" value="TreeGrafter"/>
</dbReference>
<dbReference type="GO" id="GO:0006096">
    <property type="term" value="P:glycolytic process"/>
    <property type="evidence" value="ECO:0007669"/>
    <property type="project" value="UniProtKB-UniRule"/>
</dbReference>
<dbReference type="CDD" id="cd00318">
    <property type="entry name" value="Phosphoglycerate_kinase"/>
    <property type="match status" value="1"/>
</dbReference>
<dbReference type="FunFam" id="3.40.50.1260:FF:000003">
    <property type="entry name" value="Phosphoglycerate kinase"/>
    <property type="match status" value="1"/>
</dbReference>
<dbReference type="FunFam" id="3.40.50.1260:FF:000006">
    <property type="entry name" value="Phosphoglycerate kinase"/>
    <property type="match status" value="1"/>
</dbReference>
<dbReference type="Gene3D" id="3.40.50.1260">
    <property type="entry name" value="Phosphoglycerate kinase, N-terminal domain"/>
    <property type="match status" value="2"/>
</dbReference>
<dbReference type="HAMAP" id="MF_00145">
    <property type="entry name" value="Phosphoglyc_kinase"/>
    <property type="match status" value="1"/>
</dbReference>
<dbReference type="InterPro" id="IPR001576">
    <property type="entry name" value="Phosphoglycerate_kinase"/>
</dbReference>
<dbReference type="InterPro" id="IPR015911">
    <property type="entry name" value="Phosphoglycerate_kinase_CS"/>
</dbReference>
<dbReference type="InterPro" id="IPR015824">
    <property type="entry name" value="Phosphoglycerate_kinase_N"/>
</dbReference>
<dbReference type="InterPro" id="IPR036043">
    <property type="entry name" value="Phosphoglycerate_kinase_sf"/>
</dbReference>
<dbReference type="PANTHER" id="PTHR11406">
    <property type="entry name" value="PHOSPHOGLYCERATE KINASE"/>
    <property type="match status" value="1"/>
</dbReference>
<dbReference type="PANTHER" id="PTHR11406:SF23">
    <property type="entry name" value="PHOSPHOGLYCERATE KINASE 1, CHLOROPLASTIC-RELATED"/>
    <property type="match status" value="1"/>
</dbReference>
<dbReference type="Pfam" id="PF00162">
    <property type="entry name" value="PGK"/>
    <property type="match status" value="1"/>
</dbReference>
<dbReference type="PIRSF" id="PIRSF000724">
    <property type="entry name" value="Pgk"/>
    <property type="match status" value="1"/>
</dbReference>
<dbReference type="PRINTS" id="PR00477">
    <property type="entry name" value="PHGLYCKINASE"/>
</dbReference>
<dbReference type="SUPFAM" id="SSF53748">
    <property type="entry name" value="Phosphoglycerate kinase"/>
    <property type="match status" value="1"/>
</dbReference>
<dbReference type="PROSITE" id="PS00111">
    <property type="entry name" value="PGLYCERATE_KINASE"/>
    <property type="match status" value="1"/>
</dbReference>
<reference key="1">
    <citation type="submission" date="2006-05" db="EMBL/GenBank/DDBJ databases">
        <authorList>
            <consortium name="Genoscope"/>
        </authorList>
    </citation>
    <scope>NUCLEOTIDE SEQUENCE [LARGE SCALE GENOMIC DNA]</scope>
    <source>
        <strain>WH7803</strain>
    </source>
</reference>
<evidence type="ECO:0000255" key="1">
    <source>
        <dbReference type="HAMAP-Rule" id="MF_00145"/>
    </source>
</evidence>